<feature type="chain" id="PRO_0000354424" description="Small ribosomal subunit protein uS14c">
    <location>
        <begin position="1"/>
        <end position="100"/>
    </location>
</feature>
<evidence type="ECO:0000255" key="1">
    <source>
        <dbReference type="HAMAP-Rule" id="MF_00537"/>
    </source>
</evidence>
<evidence type="ECO:0000305" key="2"/>
<gene>
    <name evidence="1" type="primary">rps14</name>
</gene>
<reference key="1">
    <citation type="submission" date="2007-03" db="EMBL/GenBank/DDBJ databases">
        <title>Sequencing analysis of Lobularia maritima chloroplast DNA.</title>
        <authorList>
            <person name="Hosouchi T."/>
            <person name="Tsuruoka H."/>
            <person name="Kotani H."/>
        </authorList>
    </citation>
    <scope>NUCLEOTIDE SEQUENCE [LARGE SCALE GENOMIC DNA]</scope>
</reference>
<proteinExistence type="inferred from homology"/>
<name>RR14_LOBMA</name>
<sequence length="100" mass="11706">MAKKSLIYREKKRQKLEQQYHLIRRSSKKEISQIPSLSEKWKIHGKLQSPPRNSAPTRLHRRCFSTGRPRANYRDFGLSGHILREMVHAGLLPGATRSSW</sequence>
<dbReference type="EMBL" id="AP009375">
    <property type="protein sequence ID" value="BAF50547.1"/>
    <property type="molecule type" value="Genomic_DNA"/>
</dbReference>
<dbReference type="RefSeq" id="YP_001123723.1">
    <property type="nucleotide sequence ID" value="NC_009274.1"/>
</dbReference>
<dbReference type="SMR" id="A4QLJ2"/>
<dbReference type="GeneID" id="4964905"/>
<dbReference type="GO" id="GO:0009507">
    <property type="term" value="C:chloroplast"/>
    <property type="evidence" value="ECO:0007669"/>
    <property type="project" value="UniProtKB-SubCell"/>
</dbReference>
<dbReference type="GO" id="GO:0015935">
    <property type="term" value="C:small ribosomal subunit"/>
    <property type="evidence" value="ECO:0007669"/>
    <property type="project" value="TreeGrafter"/>
</dbReference>
<dbReference type="GO" id="GO:0019843">
    <property type="term" value="F:rRNA binding"/>
    <property type="evidence" value="ECO:0007669"/>
    <property type="project" value="UniProtKB-UniRule"/>
</dbReference>
<dbReference type="GO" id="GO:0003735">
    <property type="term" value="F:structural constituent of ribosome"/>
    <property type="evidence" value="ECO:0007669"/>
    <property type="project" value="InterPro"/>
</dbReference>
<dbReference type="GO" id="GO:0006412">
    <property type="term" value="P:translation"/>
    <property type="evidence" value="ECO:0007669"/>
    <property type="project" value="UniProtKB-UniRule"/>
</dbReference>
<dbReference type="FunFam" id="1.10.287.1480:FF:000001">
    <property type="entry name" value="30S ribosomal protein S14"/>
    <property type="match status" value="1"/>
</dbReference>
<dbReference type="Gene3D" id="1.10.287.1480">
    <property type="match status" value="1"/>
</dbReference>
<dbReference type="HAMAP" id="MF_00537">
    <property type="entry name" value="Ribosomal_uS14_1"/>
    <property type="match status" value="1"/>
</dbReference>
<dbReference type="InterPro" id="IPR001209">
    <property type="entry name" value="Ribosomal_uS14"/>
</dbReference>
<dbReference type="InterPro" id="IPR023036">
    <property type="entry name" value="Ribosomal_uS14_bac/plastid"/>
</dbReference>
<dbReference type="InterPro" id="IPR018271">
    <property type="entry name" value="Ribosomal_uS14_CS"/>
</dbReference>
<dbReference type="NCBIfam" id="NF006477">
    <property type="entry name" value="PRK08881.1"/>
    <property type="match status" value="1"/>
</dbReference>
<dbReference type="PANTHER" id="PTHR19836">
    <property type="entry name" value="30S RIBOSOMAL PROTEIN S14"/>
    <property type="match status" value="1"/>
</dbReference>
<dbReference type="PANTHER" id="PTHR19836:SF19">
    <property type="entry name" value="SMALL RIBOSOMAL SUBUNIT PROTEIN US14M"/>
    <property type="match status" value="1"/>
</dbReference>
<dbReference type="Pfam" id="PF00253">
    <property type="entry name" value="Ribosomal_S14"/>
    <property type="match status" value="1"/>
</dbReference>
<dbReference type="SUPFAM" id="SSF57716">
    <property type="entry name" value="Glucocorticoid receptor-like (DNA-binding domain)"/>
    <property type="match status" value="1"/>
</dbReference>
<dbReference type="PROSITE" id="PS00527">
    <property type="entry name" value="RIBOSOMAL_S14"/>
    <property type="match status" value="1"/>
</dbReference>
<keyword id="KW-0150">Chloroplast</keyword>
<keyword id="KW-0934">Plastid</keyword>
<keyword id="KW-0687">Ribonucleoprotein</keyword>
<keyword id="KW-0689">Ribosomal protein</keyword>
<keyword id="KW-0694">RNA-binding</keyword>
<keyword id="KW-0699">rRNA-binding</keyword>
<protein>
    <recommendedName>
        <fullName evidence="1">Small ribosomal subunit protein uS14c</fullName>
    </recommendedName>
    <alternativeName>
        <fullName evidence="2">30S ribosomal protein S14, chloroplastic</fullName>
    </alternativeName>
</protein>
<organism>
    <name type="scientific">Lobularia maritima</name>
    <name type="common">Sweet alyssum</name>
    <name type="synonym">Alyssum maritimum</name>
    <dbReference type="NCBI Taxonomy" id="226051"/>
    <lineage>
        <taxon>Eukaryota</taxon>
        <taxon>Viridiplantae</taxon>
        <taxon>Streptophyta</taxon>
        <taxon>Embryophyta</taxon>
        <taxon>Tracheophyta</taxon>
        <taxon>Spermatophyta</taxon>
        <taxon>Magnoliopsida</taxon>
        <taxon>eudicotyledons</taxon>
        <taxon>Gunneridae</taxon>
        <taxon>Pentapetalae</taxon>
        <taxon>rosids</taxon>
        <taxon>malvids</taxon>
        <taxon>Brassicales</taxon>
        <taxon>Brassicaceae</taxon>
        <taxon>Anastaticeae</taxon>
        <taxon>Lobularia</taxon>
    </lineage>
</organism>
<accession>A4QLJ2</accession>
<geneLocation type="chloroplast"/>
<comment type="function">
    <text evidence="1">Binds 16S rRNA, required for the assembly of 30S particles.</text>
</comment>
<comment type="subunit">
    <text evidence="1">Part of the 30S ribosomal subunit.</text>
</comment>
<comment type="subcellular location">
    <subcellularLocation>
        <location>Plastid</location>
        <location>Chloroplast</location>
    </subcellularLocation>
</comment>
<comment type="similarity">
    <text evidence="1">Belongs to the universal ribosomal protein uS14 family.</text>
</comment>